<keyword id="KW-0165">Cleavage on pair of basic residues</keyword>
<keyword id="KW-1015">Disulfide bond</keyword>
<keyword id="KW-0325">Glycoprotein</keyword>
<keyword id="KW-0339">Growth factor</keyword>
<keyword id="KW-0372">Hormone</keyword>
<keyword id="KW-1185">Reference proteome</keyword>
<keyword id="KW-0964">Secreted</keyword>
<keyword id="KW-0732">Signal</keyword>
<dbReference type="EMBL" id="M32755">
    <property type="protein sequence ID" value="AAA41437.1"/>
    <property type="molecule type" value="Genomic_DNA"/>
</dbReference>
<dbReference type="EMBL" id="M32754">
    <property type="protein sequence ID" value="AAA41437.1"/>
    <property type="status" value="JOINED"/>
    <property type="molecule type" value="Genomic_DNA"/>
</dbReference>
<dbReference type="EMBL" id="M36453">
    <property type="protein sequence ID" value="AAA41435.1"/>
    <property type="molecule type" value="mRNA"/>
</dbReference>
<dbReference type="EMBL" id="BC083564">
    <property type="protein sequence ID" value="AAH83564.1"/>
    <property type="molecule type" value="mRNA"/>
</dbReference>
<dbReference type="PIR" id="A41398">
    <property type="entry name" value="A40056"/>
</dbReference>
<dbReference type="RefSeq" id="NP_036722.1">
    <property type="nucleotide sequence ID" value="NM_012590.2"/>
</dbReference>
<dbReference type="FunCoup" id="P17490">
    <property type="interactions" value="475"/>
</dbReference>
<dbReference type="STRING" id="10116.ENSRNOP00000027227"/>
<dbReference type="GlyCosmos" id="P17490">
    <property type="glycosylation" value="2 sites, No reported glycans"/>
</dbReference>
<dbReference type="GlyGen" id="P17490">
    <property type="glycosylation" value="3 sites"/>
</dbReference>
<dbReference type="PhosphoSitePlus" id="P17490"/>
<dbReference type="PaxDb" id="10116-ENSRNOP00000027227"/>
<dbReference type="Ensembl" id="ENSRNOT00000027227.5">
    <property type="protein sequence ID" value="ENSRNOP00000027227.2"/>
    <property type="gene ID" value="ENSRNOG00000020097.5"/>
</dbReference>
<dbReference type="GeneID" id="24504"/>
<dbReference type="KEGG" id="rno:24504"/>
<dbReference type="UCSC" id="RGD:2912">
    <property type="organism name" value="rat"/>
</dbReference>
<dbReference type="AGR" id="RGD:2912"/>
<dbReference type="CTD" id="3623"/>
<dbReference type="RGD" id="2912">
    <property type="gene designation" value="Inha"/>
</dbReference>
<dbReference type="eggNOG" id="KOG3900">
    <property type="taxonomic scope" value="Eukaryota"/>
</dbReference>
<dbReference type="GeneTree" id="ENSGT00390000005935"/>
<dbReference type="HOGENOM" id="CLU_064515_0_0_1"/>
<dbReference type="InParanoid" id="P17490"/>
<dbReference type="OMA" id="TYVFRPS"/>
<dbReference type="OrthoDB" id="9929039at2759"/>
<dbReference type="PhylomeDB" id="P17490"/>
<dbReference type="TreeFam" id="TF331531"/>
<dbReference type="Reactome" id="R-RNO-1502540">
    <property type="pathway name" value="Signaling by Activin"/>
</dbReference>
<dbReference type="Reactome" id="R-RNO-201451">
    <property type="pathway name" value="Signaling by BMP"/>
</dbReference>
<dbReference type="Reactome" id="R-RNO-209822">
    <property type="pathway name" value="Glycoprotein hormones"/>
</dbReference>
<dbReference type="Reactome" id="R-RNO-9839406">
    <property type="pathway name" value="TGFBR3 regulates activin signaling"/>
</dbReference>
<dbReference type="PRO" id="PR:P17490"/>
<dbReference type="Proteomes" id="UP000002494">
    <property type="component" value="Chromosome 9"/>
</dbReference>
<dbReference type="Bgee" id="ENSRNOG00000020097">
    <property type="expression patterns" value="Expressed in ovary and 18 other cell types or tissues"/>
</dbReference>
<dbReference type="GO" id="GO:0005615">
    <property type="term" value="C:extracellular space"/>
    <property type="evidence" value="ECO:0000314"/>
    <property type="project" value="RGD"/>
</dbReference>
<dbReference type="GO" id="GO:0043512">
    <property type="term" value="C:inhibin A complex"/>
    <property type="evidence" value="ECO:0000314"/>
    <property type="project" value="RGD"/>
</dbReference>
<dbReference type="GO" id="GO:0043513">
    <property type="term" value="C:inhibin B complex"/>
    <property type="evidence" value="ECO:0000314"/>
    <property type="project" value="RGD"/>
</dbReference>
<dbReference type="GO" id="GO:0034673">
    <property type="term" value="C:inhibin-betaglycan-ActRII complex"/>
    <property type="evidence" value="ECO:0000266"/>
    <property type="project" value="RGD"/>
</dbReference>
<dbReference type="GO" id="GO:0043025">
    <property type="term" value="C:neuronal cell body"/>
    <property type="evidence" value="ECO:0000314"/>
    <property type="project" value="RGD"/>
</dbReference>
<dbReference type="GO" id="GO:0001917">
    <property type="term" value="C:photoreceptor inner segment"/>
    <property type="evidence" value="ECO:0000314"/>
    <property type="project" value="RGD"/>
</dbReference>
<dbReference type="GO" id="GO:0001750">
    <property type="term" value="C:photoreceptor outer segment"/>
    <property type="evidence" value="ECO:0000314"/>
    <property type="project" value="RGD"/>
</dbReference>
<dbReference type="GO" id="GO:0005125">
    <property type="term" value="F:cytokine activity"/>
    <property type="evidence" value="ECO:0000318"/>
    <property type="project" value="GO_Central"/>
</dbReference>
<dbReference type="GO" id="GO:0008083">
    <property type="term" value="F:growth factor activity"/>
    <property type="evidence" value="ECO:0007669"/>
    <property type="project" value="UniProtKB-KW"/>
</dbReference>
<dbReference type="GO" id="GO:0005179">
    <property type="term" value="F:hormone activity"/>
    <property type="evidence" value="ECO:0007669"/>
    <property type="project" value="UniProtKB-KW"/>
</dbReference>
<dbReference type="GO" id="GO:0034711">
    <property type="term" value="F:inhibin binding"/>
    <property type="evidence" value="ECO:0000353"/>
    <property type="project" value="RGD"/>
</dbReference>
<dbReference type="GO" id="GO:0044877">
    <property type="term" value="F:protein-containing complex binding"/>
    <property type="evidence" value="ECO:0000314"/>
    <property type="project" value="RGD"/>
</dbReference>
<dbReference type="GO" id="GO:0005102">
    <property type="term" value="F:signaling receptor binding"/>
    <property type="evidence" value="ECO:0000266"/>
    <property type="project" value="RGD"/>
</dbReference>
<dbReference type="GO" id="GO:0042541">
    <property type="term" value="P:hemoglobin biosynthetic process"/>
    <property type="evidence" value="ECO:0000250"/>
    <property type="project" value="UniProtKB"/>
</dbReference>
<dbReference type="GO" id="GO:0008584">
    <property type="term" value="P:male gonad development"/>
    <property type="evidence" value="ECO:0000315"/>
    <property type="project" value="RGD"/>
</dbReference>
<dbReference type="GO" id="GO:0046882">
    <property type="term" value="P:negative regulation of follicle-stimulating hormone secretion"/>
    <property type="evidence" value="ECO:0000315"/>
    <property type="project" value="RGD"/>
</dbReference>
<dbReference type="GO" id="GO:0001541">
    <property type="term" value="P:ovarian follicle development"/>
    <property type="evidence" value="ECO:0000315"/>
    <property type="project" value="RGD"/>
</dbReference>
<dbReference type="GO" id="GO:0051726">
    <property type="term" value="P:regulation of cell cycle"/>
    <property type="evidence" value="ECO:0000266"/>
    <property type="project" value="RGD"/>
</dbReference>
<dbReference type="GO" id="GO:0042127">
    <property type="term" value="P:regulation of cell population proliferation"/>
    <property type="evidence" value="ECO:0000266"/>
    <property type="project" value="RGD"/>
</dbReference>
<dbReference type="FunFam" id="2.10.90.10:FF:000024">
    <property type="entry name" value="Inhibin alpha chain"/>
    <property type="match status" value="1"/>
</dbReference>
<dbReference type="Gene3D" id="2.10.90.10">
    <property type="entry name" value="Cystine-knot cytokines"/>
    <property type="match status" value="1"/>
</dbReference>
<dbReference type="InterPro" id="IPR029034">
    <property type="entry name" value="Cystine-knot_cytokine"/>
</dbReference>
<dbReference type="InterPro" id="IPR017175">
    <property type="entry name" value="Inhibin_asu"/>
</dbReference>
<dbReference type="InterPro" id="IPR001839">
    <property type="entry name" value="TGF-b_C"/>
</dbReference>
<dbReference type="InterPro" id="IPR015615">
    <property type="entry name" value="TGF-beta-rel"/>
</dbReference>
<dbReference type="InterPro" id="IPR017948">
    <property type="entry name" value="TGFb_CS"/>
</dbReference>
<dbReference type="PANTHER" id="PTHR11848:SF117">
    <property type="entry name" value="INHIBIN ALPHA CHAIN"/>
    <property type="match status" value="1"/>
</dbReference>
<dbReference type="PANTHER" id="PTHR11848">
    <property type="entry name" value="TGF-BETA FAMILY"/>
    <property type="match status" value="1"/>
</dbReference>
<dbReference type="Pfam" id="PF00019">
    <property type="entry name" value="TGF_beta"/>
    <property type="match status" value="1"/>
</dbReference>
<dbReference type="PIRSF" id="PIRSF037328">
    <property type="entry name" value="Inhibin_alpha_subunit"/>
    <property type="match status" value="1"/>
</dbReference>
<dbReference type="PRINTS" id="PR00669">
    <property type="entry name" value="INHIBINA"/>
</dbReference>
<dbReference type="SMART" id="SM00204">
    <property type="entry name" value="TGFB"/>
    <property type="match status" value="1"/>
</dbReference>
<dbReference type="SUPFAM" id="SSF57501">
    <property type="entry name" value="Cystine-knot cytokines"/>
    <property type="match status" value="1"/>
</dbReference>
<dbReference type="PROSITE" id="PS00250">
    <property type="entry name" value="TGF_BETA_1"/>
    <property type="match status" value="1"/>
</dbReference>
<dbReference type="PROSITE" id="PS51362">
    <property type="entry name" value="TGF_BETA_2"/>
    <property type="match status" value="1"/>
</dbReference>
<protein>
    <recommendedName>
        <fullName>Inhibin alpha chain</fullName>
    </recommendedName>
</protein>
<reference key="1">
    <citation type="journal article" date="1989" name="Mol. Endocrinol.">
        <title>Analysis of the 5'-flanking regions of rat inhibin alpha- and beta-B-subunit genes suggests two different regulatory mechanisms.</title>
        <authorList>
            <person name="Feng Z.-M."/>
            <person name="Li Y.-P."/>
            <person name="Chen C.-L.C."/>
        </authorList>
    </citation>
    <scope>NUCLEOTIDE SEQUENCE</scope>
    <source>
        <tissue>Liver</tissue>
    </source>
</reference>
<reference key="2">
    <citation type="journal article" date="1987" name="Mol. Endocrinol.">
        <title>Rat inhibin: molecular cloning of alpha- and beta-subunit complementary deoxyribonucleic acids and expression in the ovary.</title>
        <authorList>
            <person name="Woodruff T.K."/>
            <person name="Meunier H."/>
            <person name="Jones P.B.C."/>
            <person name="Hsueh A.J.W."/>
            <person name="Mayo K.E."/>
        </authorList>
    </citation>
    <scope>NUCLEOTIDE SEQUENCE</scope>
</reference>
<reference key="3">
    <citation type="journal article" date="1987" name="Mol. Endocrinol.">
        <title>Complementary deoxyribonucleic acid (cDNA) cloning and DNA sequence analysis of rat ovarian inhibins.</title>
        <authorList>
            <person name="Esch F.S."/>
            <person name="Shimasaki S."/>
            <person name="Cooksey K."/>
            <person name="Mercado M."/>
            <person name="Mason A.J."/>
            <person name="Ying S.-Y."/>
            <person name="Ueno N."/>
            <person name="Ling N."/>
        </authorList>
    </citation>
    <scope>NUCLEOTIDE SEQUENCE</scope>
</reference>
<reference key="4">
    <citation type="journal article" date="2004" name="Genome Res.">
        <title>The status, quality, and expansion of the NIH full-length cDNA project: the Mammalian Gene Collection (MGC).</title>
        <authorList>
            <consortium name="The MGC Project Team"/>
        </authorList>
    </citation>
    <scope>NUCLEOTIDE SEQUENCE [LARGE SCALE MRNA]</scope>
    <source>
        <tissue>Testis</tissue>
    </source>
</reference>
<reference key="5">
    <citation type="journal article" date="1988" name="Proc. Natl. Acad. Sci. U.S.A.">
        <title>Gonadal and extragonadal expression of inhibin alpha, beta A, and beta B subunits in various tissues predicts diverse functions.</title>
        <authorList>
            <person name="Meunier H."/>
            <person name="Rivier C."/>
            <person name="Evans R.M."/>
            <person name="Vale W."/>
        </authorList>
    </citation>
    <scope>TISSUE SPECIFICITY</scope>
</reference>
<reference key="6">
    <citation type="journal article" date="2009" name="Endocrinology">
        <title>Inhibin B is a more potent suppressor of rat follicle-stimulating hormone release than inhibin a in vitro and in vivo.</title>
        <authorList>
            <person name="Makanji Y."/>
            <person name="Temple-Smith P.D."/>
            <person name="Walton K.L."/>
            <person name="Harrison C.A."/>
            <person name="Robertson D.M."/>
        </authorList>
    </citation>
    <scope>FUNCTION</scope>
    <scope>SUBCELLULAR LOCATION</scope>
</reference>
<proteinExistence type="evidence at transcript level"/>
<accession>P17490</accession>
<name>INHA_RAT</name>
<organism>
    <name type="scientific">Rattus norvegicus</name>
    <name type="common">Rat</name>
    <dbReference type="NCBI Taxonomy" id="10116"/>
    <lineage>
        <taxon>Eukaryota</taxon>
        <taxon>Metazoa</taxon>
        <taxon>Chordata</taxon>
        <taxon>Craniata</taxon>
        <taxon>Vertebrata</taxon>
        <taxon>Euteleostomi</taxon>
        <taxon>Mammalia</taxon>
        <taxon>Eutheria</taxon>
        <taxon>Euarchontoglires</taxon>
        <taxon>Glires</taxon>
        <taxon>Rodentia</taxon>
        <taxon>Myomorpha</taxon>
        <taxon>Muroidea</taxon>
        <taxon>Muridae</taxon>
        <taxon>Murinae</taxon>
        <taxon>Rattus</taxon>
    </lineage>
</organism>
<sequence length="366" mass="39497">MVIQPSLLLLLLLTLQDVDSCQGPELVRELVLAKVKALFLDALGPPAMDGEGGGPGIRRLPRRHALGGFMHRTSEPEEEDVSQAILFPATGATCEDQAAAGGLAQEPEEGLFTYVFRPSQHIRSHQVTSAQLWFHTGLDRKSTAASNSSRPLLDLLVLSSGGPMAVPVSLGQSPPRWAVLHLAASAFPLLTHPILVLLLRCPLCSCSGRPETTPFLVAHTRARAPSAGERARRSAPSMPWPWSPAALRLLQRPPEEPSAHAFCHRAALNISFQELGWDRWIVHPPSFIFHYCHGSCGMPTSDLPLPVPGAPPTPAQPLFLVPGAKPCCAALPGSMRSLRVRTTSDGGYSFKYEMVPNLITQHCACI</sequence>
<feature type="signal peptide" evidence="1">
    <location>
        <begin position="1"/>
        <end position="20"/>
    </location>
</feature>
<feature type="propeptide" id="PRO_0000033694" evidence="1">
    <location>
        <begin position="21"/>
        <end position="63"/>
    </location>
</feature>
<feature type="propeptide" id="PRO_0000033695" description="Inhibin alpha N-terminal region" evidence="1">
    <location>
        <begin position="64"/>
        <end position="233"/>
    </location>
</feature>
<feature type="chain" id="PRO_0000033696" description="Inhibin alpha chain">
    <location>
        <begin position="234"/>
        <end position="366"/>
    </location>
</feature>
<feature type="site" description="Cleavage" evidence="1">
    <location>
        <begin position="63"/>
        <end position="64"/>
    </location>
</feature>
<feature type="site" description="Cleavage" evidence="1">
    <location>
        <begin position="233"/>
        <end position="234"/>
    </location>
</feature>
<feature type="glycosylation site" description="N-linked (GlcNAc...) asparagine" evidence="4">
    <location>
        <position position="147"/>
    </location>
</feature>
<feature type="glycosylation site" description="N-linked (GlcNAc...) asparagine" evidence="1">
    <location>
        <position position="269"/>
    </location>
</feature>
<feature type="disulfide bond" evidence="1">
    <location>
        <begin position="263"/>
        <end position="328"/>
    </location>
</feature>
<feature type="disulfide bond" evidence="1">
    <location>
        <begin position="292"/>
        <end position="363"/>
    </location>
</feature>
<feature type="disulfide bond" evidence="1">
    <location>
        <begin position="296"/>
        <end position="365"/>
    </location>
</feature>
<feature type="disulfide bond" description="Interchain" evidence="1">
    <location>
        <position position="327"/>
    </location>
</feature>
<evidence type="ECO:0000250" key="1"/>
<evidence type="ECO:0000250" key="2">
    <source>
        <dbReference type="UniProtKB" id="P05111"/>
    </source>
</evidence>
<evidence type="ECO:0000250" key="3">
    <source>
        <dbReference type="UniProtKB" id="P08476"/>
    </source>
</evidence>
<evidence type="ECO:0000255" key="4"/>
<evidence type="ECO:0000269" key="5">
    <source>
    </source>
</evidence>
<evidence type="ECO:0000269" key="6">
    <source>
    </source>
</evidence>
<evidence type="ECO:0000305" key="7"/>
<comment type="function">
    <text evidence="2">Inhibins and activins inhibit and activate, respectively, the secretion of follitropin by the pituitary gland. Inhibins/activins are involved in regulating a number of diverse functions such as hypothalamic and pituitary hormone secretion, gonadal hormone secretion, germ cell development and maturation, erythroid differentiation, insulin secretion, nerve cell survival, embryonic axial development or bone growth, depending on their subunit composition. Inhibins appear to oppose the functions of activins.</text>
</comment>
<comment type="function">
    <text evidence="3">Inhibin A is a dimer of alpha/INHA and beta-A/INHBA that functions as a feedback regulator in the hypothalamic-pituitary-gonadal (HPG) axis. Inhibits the secretion of FSH from the anterior pituitary gland by acting on pituitary gonadotrope cells. Antagonizes activin A by binding to the proteoglycan, betaglycan, and forming a stable complex with and, thereby, sequestering type II activin receptors while excluding type I receptor.</text>
</comment>
<comment type="function">
    <text evidence="2 5">Inhibin B is a dimer of alpha and beta-B that plays a crucial role in the regulation of the reproductive system by inhibiting the secretion of follicle-stimulating hormone (FSH) from the anterior pituitary gland (PubMed:19589860). Thereby, maintains reproductive homeostasis in both males and females. Acts as a more potent suppressor of FSH release than inhibin A (By similarity). Functions as competitive receptor antagonist binding activin type II receptors with high affinity in the presence of the TGF-beta type III coreceptor/TGFBR3L (By similarity).</text>
</comment>
<comment type="subunit">
    <text evidence="2">Dimeric, linked by one or more disulfide bonds. Activin B is a dimer of alpha and beta-B. Inhibin A is a dimer of alpha and beta-A. Inhibin B is a dimer of alpha and beta-B. Interacts with TGFBR3L; this interaction regulates female fertility.</text>
</comment>
<comment type="subcellular location">
    <subcellularLocation>
        <location evidence="5">Secreted</location>
    </subcellularLocation>
</comment>
<comment type="tissue specificity">
    <text evidence="6">Mainly expressed in ovary and testis. Alpha- and beta-B-subunits are the predominant forms found in testis. Also found in placenta, pituitary, adrenal gland, bone marrow, kidney, spinal cord and brain.</text>
</comment>
<comment type="PTM">
    <text>Proteolytic processing yields a number of bioactive forms, consisting either solely of the mature alpha chain, of the most N-terminal propeptide linked through a disulfide bond to the mature alpha chain, or of the entire proprotein.</text>
</comment>
<comment type="similarity">
    <text evidence="7">Belongs to the TGF-beta family.</text>
</comment>
<gene>
    <name type="primary">Inha</name>
</gene>